<accession>Q1DQS9</accession>
<accession>J3K3X3</accession>
<comment type="function">
    <text evidence="1">Catalytic subunit of the molybdopterin synthase complex, a complex that catalyzes the conversion of precursor Z into molybdopterin. Acts by mediating the incorporation of 2 sulfur atoms from thiocarboxylated MOCS2A into precursor Z to generate a dithiolene group.</text>
</comment>
<comment type="catalytic activity">
    <reaction evidence="1">
        <text>2 [molybdopterin-synthase sulfur-carrier protein]-C-terminal-Gly-aminoethanethioate + cyclic pyranopterin phosphate + H2O = molybdopterin + 2 [molybdopterin-synthase sulfur-carrier protein]-C-terminal Gly-Gly + 2 H(+)</text>
        <dbReference type="Rhea" id="RHEA:26333"/>
        <dbReference type="Rhea" id="RHEA-COMP:12202"/>
        <dbReference type="Rhea" id="RHEA-COMP:19907"/>
        <dbReference type="ChEBI" id="CHEBI:15377"/>
        <dbReference type="ChEBI" id="CHEBI:15378"/>
        <dbReference type="ChEBI" id="CHEBI:58698"/>
        <dbReference type="ChEBI" id="CHEBI:59648"/>
        <dbReference type="ChEBI" id="CHEBI:90778"/>
        <dbReference type="ChEBI" id="CHEBI:232372"/>
        <dbReference type="EC" id="2.8.1.12"/>
    </reaction>
</comment>
<comment type="pathway">
    <text evidence="1">Cofactor biosynthesis; molybdopterin biosynthesis.</text>
</comment>
<comment type="subunit">
    <text evidence="1">Heterotetramer; composed of 2 small (MOCS2A) and 2 large (MOCS2B) subunits.</text>
</comment>
<comment type="subcellular location">
    <subcellularLocation>
        <location evidence="1">Cytoplasm</location>
    </subcellularLocation>
</comment>
<comment type="similarity">
    <text evidence="1">Belongs to the MoaE family. MOCS2B subfamily.</text>
</comment>
<keyword id="KW-0963">Cytoplasm</keyword>
<keyword id="KW-0501">Molybdenum cofactor biosynthesis</keyword>
<keyword id="KW-1185">Reference proteome</keyword>
<keyword id="KW-0808">Transferase</keyword>
<dbReference type="EC" id="2.8.1.12" evidence="1"/>
<dbReference type="EMBL" id="GG704912">
    <property type="protein sequence ID" value="EAS31855.3"/>
    <property type="molecule type" value="Genomic_DNA"/>
</dbReference>
<dbReference type="RefSeq" id="XP_001243438.2">
    <property type="nucleotide sequence ID" value="XM_001243437.2"/>
</dbReference>
<dbReference type="SMR" id="Q1DQS9"/>
<dbReference type="STRING" id="246410.Q1DQS9"/>
<dbReference type="GeneID" id="4562418"/>
<dbReference type="KEGG" id="cim:CIMG_07334"/>
<dbReference type="VEuPathDB" id="FungiDB:CIMG_07334"/>
<dbReference type="InParanoid" id="Q1DQS9"/>
<dbReference type="OMA" id="WKHQFFA"/>
<dbReference type="OrthoDB" id="5531344at2759"/>
<dbReference type="UniPathway" id="UPA00344"/>
<dbReference type="Proteomes" id="UP000001261">
    <property type="component" value="Unassembled WGS sequence"/>
</dbReference>
<dbReference type="GO" id="GO:1990140">
    <property type="term" value="C:molybdopterin synthase complex"/>
    <property type="evidence" value="ECO:0000250"/>
    <property type="project" value="UniProtKB"/>
</dbReference>
<dbReference type="GO" id="GO:0030366">
    <property type="term" value="F:molybdopterin synthase activity"/>
    <property type="evidence" value="ECO:0007669"/>
    <property type="project" value="UniProtKB-UniRule"/>
</dbReference>
<dbReference type="GO" id="GO:0006777">
    <property type="term" value="P:Mo-molybdopterin cofactor biosynthetic process"/>
    <property type="evidence" value="ECO:0000250"/>
    <property type="project" value="UniProtKB"/>
</dbReference>
<dbReference type="CDD" id="cd00756">
    <property type="entry name" value="MoaE"/>
    <property type="match status" value="1"/>
</dbReference>
<dbReference type="Gene3D" id="3.90.1170.40">
    <property type="entry name" value="Molybdopterin biosynthesis MoaE subunit"/>
    <property type="match status" value="1"/>
</dbReference>
<dbReference type="HAMAP" id="MF_03052">
    <property type="entry name" value="MOC2B"/>
    <property type="match status" value="1"/>
</dbReference>
<dbReference type="InterPro" id="IPR036563">
    <property type="entry name" value="MoaE_sf"/>
</dbReference>
<dbReference type="InterPro" id="IPR028888">
    <property type="entry name" value="MOCS2B_euk"/>
</dbReference>
<dbReference type="InterPro" id="IPR003448">
    <property type="entry name" value="Mopterin_biosynth_MoaE"/>
</dbReference>
<dbReference type="PANTHER" id="PTHR23404">
    <property type="entry name" value="MOLYBDOPTERIN SYNTHASE RELATED"/>
    <property type="match status" value="1"/>
</dbReference>
<dbReference type="Pfam" id="PF02391">
    <property type="entry name" value="MoaE"/>
    <property type="match status" value="1"/>
</dbReference>
<dbReference type="SUPFAM" id="SSF54690">
    <property type="entry name" value="Molybdopterin synthase subunit MoaE"/>
    <property type="match status" value="1"/>
</dbReference>
<feature type="chain" id="PRO_0000369354" description="Molybdopterin synthase catalytic subunit">
    <location>
        <begin position="1"/>
        <end position="196"/>
    </location>
</feature>
<feature type="region of interest" description="Disordered" evidence="2">
    <location>
        <begin position="1"/>
        <end position="29"/>
    </location>
</feature>
<feature type="region of interest" description="Disordered" evidence="2">
    <location>
        <begin position="174"/>
        <end position="196"/>
    </location>
</feature>
<feature type="compositionally biased region" description="Basic and acidic residues" evidence="2">
    <location>
        <begin position="183"/>
        <end position="196"/>
    </location>
</feature>
<feature type="binding site" evidence="1">
    <location>
        <begin position="145"/>
        <end position="146"/>
    </location>
    <ligand>
        <name>substrate</name>
    </ligand>
</feature>
<feature type="binding site" evidence="1">
    <location>
        <position position="161"/>
    </location>
    <ligand>
        <name>substrate</name>
    </ligand>
</feature>
<feature type="binding site" evidence="1">
    <location>
        <begin position="168"/>
        <end position="170"/>
    </location>
    <ligand>
        <name>substrate</name>
    </ligand>
</feature>
<reference key="1">
    <citation type="journal article" date="2009" name="Genome Res.">
        <title>Comparative genomic analyses of the human fungal pathogens Coccidioides and their relatives.</title>
        <authorList>
            <person name="Sharpton T.J."/>
            <person name="Stajich J.E."/>
            <person name="Rounsley S.D."/>
            <person name="Gardner M.J."/>
            <person name="Wortman J.R."/>
            <person name="Jordar V.S."/>
            <person name="Maiti R."/>
            <person name="Kodira C.D."/>
            <person name="Neafsey D.E."/>
            <person name="Zeng Q."/>
            <person name="Hung C.-Y."/>
            <person name="McMahan C."/>
            <person name="Muszewska A."/>
            <person name="Grynberg M."/>
            <person name="Mandel M.A."/>
            <person name="Kellner E.M."/>
            <person name="Barker B.M."/>
            <person name="Galgiani J.N."/>
            <person name="Orbach M.J."/>
            <person name="Kirkland T.N."/>
            <person name="Cole G.T."/>
            <person name="Henn M.R."/>
            <person name="Birren B.W."/>
            <person name="Taylor J.W."/>
        </authorList>
    </citation>
    <scope>NUCLEOTIDE SEQUENCE [LARGE SCALE GENOMIC DNA]</scope>
    <source>
        <strain>RS</strain>
    </source>
</reference>
<reference key="2">
    <citation type="journal article" date="2010" name="Genome Res.">
        <title>Population genomic sequencing of Coccidioides fungi reveals recent hybridization and transposon control.</title>
        <authorList>
            <person name="Neafsey D.E."/>
            <person name="Barker B.M."/>
            <person name="Sharpton T.J."/>
            <person name="Stajich J.E."/>
            <person name="Park D.J."/>
            <person name="Whiston E."/>
            <person name="Hung C.-Y."/>
            <person name="McMahan C."/>
            <person name="White J."/>
            <person name="Sykes S."/>
            <person name="Heiman D."/>
            <person name="Young S."/>
            <person name="Zeng Q."/>
            <person name="Abouelleil A."/>
            <person name="Aftuck L."/>
            <person name="Bessette D."/>
            <person name="Brown A."/>
            <person name="FitzGerald M."/>
            <person name="Lui A."/>
            <person name="Macdonald J.P."/>
            <person name="Priest M."/>
            <person name="Orbach M.J."/>
            <person name="Galgiani J.N."/>
            <person name="Kirkland T.N."/>
            <person name="Cole G.T."/>
            <person name="Birren B.W."/>
            <person name="Henn M.R."/>
            <person name="Taylor J.W."/>
            <person name="Rounsley S.D."/>
        </authorList>
    </citation>
    <scope>GENOME REANNOTATION</scope>
    <source>
        <strain>RS</strain>
    </source>
</reference>
<proteinExistence type="inferred from homology"/>
<gene>
    <name evidence="1" type="primary">cnxH</name>
    <name type="ORF">CIMG_07334</name>
</gene>
<name>MOC2B_COCIM</name>
<protein>
    <recommendedName>
        <fullName evidence="1">Molybdopterin synthase catalytic subunit</fullName>
        <ecNumber evidence="1">2.8.1.12</ecNumber>
    </recommendedName>
    <alternativeName>
        <fullName evidence="1">Common component for nitrate reductase and xanthine dehydrogenase protein H</fullName>
    </alternativeName>
    <alternativeName>
        <fullName evidence="1">Molybdenum cofactor synthesis protein 2 large subunit</fullName>
    </alternativeName>
    <alternativeName>
        <fullName evidence="1">Molybdenum cofactor synthesis protein 2B</fullName>
        <shortName evidence="1">MOCS2B</shortName>
    </alternativeName>
</protein>
<sequence length="196" mass="21328">MSTLPSTDPPPLPASTSSQQPAVHIPPPSYLDPTTYPQTLYLDPERIFIELTYHPLSPSTYLAHTRSPAAGANVLFLGTTRDTFEDKPVARLAYTSYAPLALRTLSSIARDAVAKHGLCGVSIAHRLGDVAVGEESIAIAISAPHRGAAWRAGEEVLEECKRRVEIWKREEFVGEPPGQGEWRANRDTDPEGKSTS</sequence>
<evidence type="ECO:0000255" key="1">
    <source>
        <dbReference type="HAMAP-Rule" id="MF_03052"/>
    </source>
</evidence>
<evidence type="ECO:0000256" key="2">
    <source>
        <dbReference type="SAM" id="MobiDB-lite"/>
    </source>
</evidence>
<organism>
    <name type="scientific">Coccidioides immitis (strain RS)</name>
    <name type="common">Valley fever fungus</name>
    <dbReference type="NCBI Taxonomy" id="246410"/>
    <lineage>
        <taxon>Eukaryota</taxon>
        <taxon>Fungi</taxon>
        <taxon>Dikarya</taxon>
        <taxon>Ascomycota</taxon>
        <taxon>Pezizomycotina</taxon>
        <taxon>Eurotiomycetes</taxon>
        <taxon>Eurotiomycetidae</taxon>
        <taxon>Onygenales</taxon>
        <taxon>Onygenaceae</taxon>
        <taxon>Coccidioides</taxon>
    </lineage>
</organism>